<proteinExistence type="inferred from homology"/>
<sequence>MTQILIVEDEQNLARFLELELTHENYNVDTEYDGQDGLDKALSHYYDLIILDLMLPSINGLEICRKIRQQQSTPIIIITAKSDTYDKVAGLDYGADDYIVKPFDIEELLARIRAILRRQPQKDIIDVNGITIDKNAFKVTVNGAEIELTKTEYDLLYLLAENKNHVMQREQILNHVWGYNSEVETNVVDVYIRYLRNKLKPYDRDKMIETVRGVGYVIR</sequence>
<name>ARLR_STAAR</name>
<accession>Q6GGZ3</accession>
<protein>
    <recommendedName>
        <fullName>Response regulator ArlR</fullName>
    </recommendedName>
</protein>
<feature type="chain" id="PRO_0000081017" description="Response regulator ArlR">
    <location>
        <begin position="1"/>
        <end position="219"/>
    </location>
</feature>
<feature type="domain" description="Response regulatory" evidence="2">
    <location>
        <begin position="3"/>
        <end position="116"/>
    </location>
</feature>
<feature type="DNA-binding region" description="OmpR/PhoB-type" evidence="3">
    <location>
        <begin position="122"/>
        <end position="219"/>
    </location>
</feature>
<feature type="modified residue" description="4-aspartylphosphate" evidence="2">
    <location>
        <position position="52"/>
    </location>
</feature>
<comment type="function">
    <text evidence="1">Member of the two-component regulatory system ArlS/ArlR involved in the regulation of adhesion, autolysis, multidrug resistance and virulence.</text>
</comment>
<comment type="subcellular location">
    <subcellularLocation>
        <location evidence="1">Cytoplasm</location>
    </subcellularLocation>
</comment>
<comment type="PTM">
    <text evidence="1">Phosphorylated by ArlS.</text>
</comment>
<evidence type="ECO:0000250" key="1"/>
<evidence type="ECO:0000255" key="2">
    <source>
        <dbReference type="PROSITE-ProRule" id="PRU00169"/>
    </source>
</evidence>
<evidence type="ECO:0000255" key="3">
    <source>
        <dbReference type="PROSITE-ProRule" id="PRU01091"/>
    </source>
</evidence>
<reference key="1">
    <citation type="journal article" date="2004" name="Proc. Natl. Acad. Sci. U.S.A.">
        <title>Complete genomes of two clinical Staphylococcus aureus strains: evidence for the rapid evolution of virulence and drug resistance.</title>
        <authorList>
            <person name="Holden M.T.G."/>
            <person name="Feil E.J."/>
            <person name="Lindsay J.A."/>
            <person name="Peacock S.J."/>
            <person name="Day N.P.J."/>
            <person name="Enright M.C."/>
            <person name="Foster T.J."/>
            <person name="Moore C.E."/>
            <person name="Hurst L."/>
            <person name="Atkin R."/>
            <person name="Barron A."/>
            <person name="Bason N."/>
            <person name="Bentley S.D."/>
            <person name="Chillingworth C."/>
            <person name="Chillingworth T."/>
            <person name="Churcher C."/>
            <person name="Clark L."/>
            <person name="Corton C."/>
            <person name="Cronin A."/>
            <person name="Doggett J."/>
            <person name="Dowd L."/>
            <person name="Feltwell T."/>
            <person name="Hance Z."/>
            <person name="Harris B."/>
            <person name="Hauser H."/>
            <person name="Holroyd S."/>
            <person name="Jagels K."/>
            <person name="James K.D."/>
            <person name="Lennard N."/>
            <person name="Line A."/>
            <person name="Mayes R."/>
            <person name="Moule S."/>
            <person name="Mungall K."/>
            <person name="Ormond D."/>
            <person name="Quail M.A."/>
            <person name="Rabbinowitsch E."/>
            <person name="Rutherford K.M."/>
            <person name="Sanders M."/>
            <person name="Sharp S."/>
            <person name="Simmonds M."/>
            <person name="Stevens K."/>
            <person name="Whitehead S."/>
            <person name="Barrell B.G."/>
            <person name="Spratt B.G."/>
            <person name="Parkhill J."/>
        </authorList>
    </citation>
    <scope>NUCLEOTIDE SEQUENCE [LARGE SCALE GENOMIC DNA]</scope>
    <source>
        <strain>MRSA252</strain>
    </source>
</reference>
<gene>
    <name type="primary">arlR</name>
    <name type="ordered locus">SAR1427</name>
</gene>
<organism>
    <name type="scientific">Staphylococcus aureus (strain MRSA252)</name>
    <dbReference type="NCBI Taxonomy" id="282458"/>
    <lineage>
        <taxon>Bacteria</taxon>
        <taxon>Bacillati</taxon>
        <taxon>Bacillota</taxon>
        <taxon>Bacilli</taxon>
        <taxon>Bacillales</taxon>
        <taxon>Staphylococcaceae</taxon>
        <taxon>Staphylococcus</taxon>
    </lineage>
</organism>
<keyword id="KW-0010">Activator</keyword>
<keyword id="KW-0963">Cytoplasm</keyword>
<keyword id="KW-0238">DNA-binding</keyword>
<keyword id="KW-0597">Phosphoprotein</keyword>
<keyword id="KW-0678">Repressor</keyword>
<keyword id="KW-0804">Transcription</keyword>
<keyword id="KW-0805">Transcription regulation</keyword>
<keyword id="KW-0902">Two-component regulatory system</keyword>
<keyword id="KW-0843">Virulence</keyword>
<dbReference type="EMBL" id="BX571856">
    <property type="protein sequence ID" value="CAG40424.1"/>
    <property type="molecule type" value="Genomic_DNA"/>
</dbReference>
<dbReference type="RefSeq" id="WP_000192137.1">
    <property type="nucleotide sequence ID" value="NC_002952.2"/>
</dbReference>
<dbReference type="SMR" id="Q6GGZ3"/>
<dbReference type="KEGG" id="sar:SAR1427"/>
<dbReference type="HOGENOM" id="CLU_000445_30_1_9"/>
<dbReference type="Proteomes" id="UP000000596">
    <property type="component" value="Chromosome"/>
</dbReference>
<dbReference type="GO" id="GO:0005829">
    <property type="term" value="C:cytosol"/>
    <property type="evidence" value="ECO:0007669"/>
    <property type="project" value="TreeGrafter"/>
</dbReference>
<dbReference type="GO" id="GO:0032993">
    <property type="term" value="C:protein-DNA complex"/>
    <property type="evidence" value="ECO:0007669"/>
    <property type="project" value="TreeGrafter"/>
</dbReference>
<dbReference type="GO" id="GO:0000156">
    <property type="term" value="F:phosphorelay response regulator activity"/>
    <property type="evidence" value="ECO:0007669"/>
    <property type="project" value="TreeGrafter"/>
</dbReference>
<dbReference type="GO" id="GO:0000976">
    <property type="term" value="F:transcription cis-regulatory region binding"/>
    <property type="evidence" value="ECO:0007669"/>
    <property type="project" value="TreeGrafter"/>
</dbReference>
<dbReference type="GO" id="GO:0006355">
    <property type="term" value="P:regulation of DNA-templated transcription"/>
    <property type="evidence" value="ECO:0007669"/>
    <property type="project" value="InterPro"/>
</dbReference>
<dbReference type="CDD" id="cd00383">
    <property type="entry name" value="trans_reg_C"/>
    <property type="match status" value="1"/>
</dbReference>
<dbReference type="FunFam" id="3.40.50.2300:FF:000001">
    <property type="entry name" value="DNA-binding response regulator PhoB"/>
    <property type="match status" value="1"/>
</dbReference>
<dbReference type="FunFam" id="1.10.10.10:FF:000005">
    <property type="entry name" value="Two-component system response regulator"/>
    <property type="match status" value="1"/>
</dbReference>
<dbReference type="Gene3D" id="3.40.50.2300">
    <property type="match status" value="1"/>
</dbReference>
<dbReference type="Gene3D" id="6.10.250.690">
    <property type="match status" value="1"/>
</dbReference>
<dbReference type="Gene3D" id="1.10.10.10">
    <property type="entry name" value="Winged helix-like DNA-binding domain superfamily/Winged helix DNA-binding domain"/>
    <property type="match status" value="1"/>
</dbReference>
<dbReference type="InterPro" id="IPR011006">
    <property type="entry name" value="CheY-like_superfamily"/>
</dbReference>
<dbReference type="InterPro" id="IPR001867">
    <property type="entry name" value="OmpR/PhoB-type_DNA-bd"/>
</dbReference>
<dbReference type="InterPro" id="IPR016032">
    <property type="entry name" value="Sig_transdc_resp-reg_C-effctor"/>
</dbReference>
<dbReference type="InterPro" id="IPR001789">
    <property type="entry name" value="Sig_transdc_resp-reg_receiver"/>
</dbReference>
<dbReference type="InterPro" id="IPR039420">
    <property type="entry name" value="WalR-like"/>
</dbReference>
<dbReference type="InterPro" id="IPR036388">
    <property type="entry name" value="WH-like_DNA-bd_sf"/>
</dbReference>
<dbReference type="PANTHER" id="PTHR48111">
    <property type="entry name" value="REGULATOR OF RPOS"/>
    <property type="match status" value="1"/>
</dbReference>
<dbReference type="PANTHER" id="PTHR48111:SF22">
    <property type="entry name" value="REGULATOR OF RPOS"/>
    <property type="match status" value="1"/>
</dbReference>
<dbReference type="Pfam" id="PF00072">
    <property type="entry name" value="Response_reg"/>
    <property type="match status" value="1"/>
</dbReference>
<dbReference type="Pfam" id="PF00486">
    <property type="entry name" value="Trans_reg_C"/>
    <property type="match status" value="1"/>
</dbReference>
<dbReference type="SMART" id="SM00448">
    <property type="entry name" value="REC"/>
    <property type="match status" value="1"/>
</dbReference>
<dbReference type="SMART" id="SM00862">
    <property type="entry name" value="Trans_reg_C"/>
    <property type="match status" value="1"/>
</dbReference>
<dbReference type="SUPFAM" id="SSF46894">
    <property type="entry name" value="C-terminal effector domain of the bipartite response regulators"/>
    <property type="match status" value="1"/>
</dbReference>
<dbReference type="SUPFAM" id="SSF52172">
    <property type="entry name" value="CheY-like"/>
    <property type="match status" value="1"/>
</dbReference>
<dbReference type="PROSITE" id="PS51755">
    <property type="entry name" value="OMPR_PHOB"/>
    <property type="match status" value="1"/>
</dbReference>
<dbReference type="PROSITE" id="PS50110">
    <property type="entry name" value="RESPONSE_REGULATORY"/>
    <property type="match status" value="1"/>
</dbReference>